<name>PDXL4_ARATH</name>
<protein>
    <recommendedName>
        <fullName>Pyridoxal 5'-phosphate synthase PDX1-like 4</fullName>
    </recommendedName>
</protein>
<evidence type="ECO:0000305" key="1"/>
<comment type="similarity">
    <text evidence="1">Belongs to the PdxS/SNZ family.</text>
</comment>
<comment type="caution">
    <text evidence="1">Although its N-terminus is strongly related to pyridoxal 5'-phosphate synthase PDX1 subunits (PDX1), it is much shorter and probably not functional.</text>
</comment>
<keyword id="KW-1185">Reference proteome</keyword>
<proteinExistence type="inferred from homology"/>
<feature type="chain" id="PRO_0000109369" description="Pyridoxal 5'-phosphate synthase PDX1-like 4">
    <location>
        <begin position="1"/>
        <end position="79"/>
    </location>
</feature>
<sequence>MAGTGVVAVYGEGAMTETKQKSPFSVKVGLAQMLRGGVIMDVVNAEQARIAEEAGACAVMALERVPADIRAQGGVARFC</sequence>
<dbReference type="EMBL" id="AC003028">
    <property type="protein sequence ID" value="AAC27170.1"/>
    <property type="molecule type" value="Genomic_DNA"/>
</dbReference>
<dbReference type="EMBL" id="CP002685">
    <property type="protein sequence ID" value="AEC09509.1"/>
    <property type="molecule type" value="Genomic_DNA"/>
</dbReference>
<dbReference type="PIR" id="C84802">
    <property type="entry name" value="C84802"/>
</dbReference>
<dbReference type="RefSeq" id="NP_181356.1">
    <property type="nucleotide sequence ID" value="NM_129378.4"/>
</dbReference>
<dbReference type="SMR" id="O80446"/>
<dbReference type="BioGRID" id="3742">
    <property type="interactions" value="4"/>
</dbReference>
<dbReference type="STRING" id="3702.O80446"/>
<dbReference type="MetOSite" id="O80446"/>
<dbReference type="PaxDb" id="3702-AT2G38210.1"/>
<dbReference type="ProteomicsDB" id="236291"/>
<dbReference type="EnsemblPlants" id="AT2G38210.1">
    <property type="protein sequence ID" value="AT2G38210.1"/>
    <property type="gene ID" value="AT2G38210"/>
</dbReference>
<dbReference type="GeneID" id="818400"/>
<dbReference type="Gramene" id="AT2G38210.1">
    <property type="protein sequence ID" value="AT2G38210.1"/>
    <property type="gene ID" value="AT2G38210"/>
</dbReference>
<dbReference type="KEGG" id="ath:AT2G38210"/>
<dbReference type="Araport" id="AT2G38210"/>
<dbReference type="TAIR" id="AT2G38210">
    <property type="gene designation" value="PDX1L4"/>
</dbReference>
<dbReference type="eggNOG" id="KOG1606">
    <property type="taxonomic scope" value="Eukaryota"/>
</dbReference>
<dbReference type="HOGENOM" id="CLU_2609332_0_0_1"/>
<dbReference type="InParanoid" id="O80446"/>
<dbReference type="OMA" id="YQAGRQH"/>
<dbReference type="PRO" id="PR:O80446"/>
<dbReference type="Proteomes" id="UP000006548">
    <property type="component" value="Chromosome 2"/>
</dbReference>
<dbReference type="ExpressionAtlas" id="O80446">
    <property type="expression patterns" value="baseline and differential"/>
</dbReference>
<dbReference type="GO" id="GO:0005783">
    <property type="term" value="C:endoplasmic reticulum"/>
    <property type="evidence" value="ECO:0007005"/>
    <property type="project" value="TAIR"/>
</dbReference>
<dbReference type="GO" id="GO:0000325">
    <property type="term" value="C:plant-type vacuole"/>
    <property type="evidence" value="ECO:0007005"/>
    <property type="project" value="TAIR"/>
</dbReference>
<dbReference type="GO" id="GO:0042823">
    <property type="term" value="P:pyridoxal phosphate biosynthetic process"/>
    <property type="evidence" value="ECO:0007669"/>
    <property type="project" value="InterPro"/>
</dbReference>
<dbReference type="Gene3D" id="3.20.20.70">
    <property type="entry name" value="Aldolase class I"/>
    <property type="match status" value="1"/>
</dbReference>
<dbReference type="InterPro" id="IPR013785">
    <property type="entry name" value="Aldolase_TIM"/>
</dbReference>
<dbReference type="InterPro" id="IPR001852">
    <property type="entry name" value="PdxS/SNZ"/>
</dbReference>
<dbReference type="InterPro" id="IPR033755">
    <property type="entry name" value="PdxS/SNZ_N"/>
</dbReference>
<dbReference type="PANTHER" id="PTHR31829:SF4">
    <property type="entry name" value="PYRIDOXAL 5'-PHOSPHATE SYNTHASE SUBUNIT PDX1.1"/>
    <property type="match status" value="1"/>
</dbReference>
<dbReference type="PANTHER" id="PTHR31829">
    <property type="entry name" value="PYRIDOXAL 5'-PHOSPHATE SYNTHASE SUBUNIT SNZ1-RELATED"/>
    <property type="match status" value="1"/>
</dbReference>
<dbReference type="Pfam" id="PF01680">
    <property type="entry name" value="SOR_SNZ"/>
    <property type="match status" value="1"/>
</dbReference>
<dbReference type="SUPFAM" id="SSF110399">
    <property type="entry name" value="ThiG-like"/>
    <property type="match status" value="1"/>
</dbReference>
<dbReference type="PROSITE" id="PS51129">
    <property type="entry name" value="PDXS_SNZ_2"/>
    <property type="match status" value="1"/>
</dbReference>
<gene>
    <name type="primary">PDX1L4</name>
    <name type="ordered locus">At2g38210</name>
    <name type="ORF">F16M14.14</name>
</gene>
<accession>O80446</accession>
<organism>
    <name type="scientific">Arabidopsis thaliana</name>
    <name type="common">Mouse-ear cress</name>
    <dbReference type="NCBI Taxonomy" id="3702"/>
    <lineage>
        <taxon>Eukaryota</taxon>
        <taxon>Viridiplantae</taxon>
        <taxon>Streptophyta</taxon>
        <taxon>Embryophyta</taxon>
        <taxon>Tracheophyta</taxon>
        <taxon>Spermatophyta</taxon>
        <taxon>Magnoliopsida</taxon>
        <taxon>eudicotyledons</taxon>
        <taxon>Gunneridae</taxon>
        <taxon>Pentapetalae</taxon>
        <taxon>rosids</taxon>
        <taxon>malvids</taxon>
        <taxon>Brassicales</taxon>
        <taxon>Brassicaceae</taxon>
        <taxon>Camelineae</taxon>
        <taxon>Arabidopsis</taxon>
    </lineage>
</organism>
<reference key="1">
    <citation type="journal article" date="1999" name="Nature">
        <title>Sequence and analysis of chromosome 2 of the plant Arabidopsis thaliana.</title>
        <authorList>
            <person name="Lin X."/>
            <person name="Kaul S."/>
            <person name="Rounsley S.D."/>
            <person name="Shea T.P."/>
            <person name="Benito M.-I."/>
            <person name="Town C.D."/>
            <person name="Fujii C.Y."/>
            <person name="Mason T.M."/>
            <person name="Bowman C.L."/>
            <person name="Barnstead M.E."/>
            <person name="Feldblyum T.V."/>
            <person name="Buell C.R."/>
            <person name="Ketchum K.A."/>
            <person name="Lee J.J."/>
            <person name="Ronning C.M."/>
            <person name="Koo H.L."/>
            <person name="Moffat K.S."/>
            <person name="Cronin L.A."/>
            <person name="Shen M."/>
            <person name="Pai G."/>
            <person name="Van Aken S."/>
            <person name="Umayam L."/>
            <person name="Tallon L.J."/>
            <person name="Gill J.E."/>
            <person name="Adams M.D."/>
            <person name="Carrera A.J."/>
            <person name="Creasy T.H."/>
            <person name="Goodman H.M."/>
            <person name="Somerville C.R."/>
            <person name="Copenhaver G.P."/>
            <person name="Preuss D."/>
            <person name="Nierman W.C."/>
            <person name="White O."/>
            <person name="Eisen J.A."/>
            <person name="Salzberg S.L."/>
            <person name="Fraser C.M."/>
            <person name="Venter J.C."/>
        </authorList>
    </citation>
    <scope>NUCLEOTIDE SEQUENCE [LARGE SCALE GENOMIC DNA]</scope>
    <source>
        <strain>cv. Columbia</strain>
    </source>
</reference>
<reference key="2">
    <citation type="journal article" date="2017" name="Plant J.">
        <title>Araport11: a complete reannotation of the Arabidopsis thaliana reference genome.</title>
        <authorList>
            <person name="Cheng C.Y."/>
            <person name="Krishnakumar V."/>
            <person name="Chan A.P."/>
            <person name="Thibaud-Nissen F."/>
            <person name="Schobel S."/>
            <person name="Town C.D."/>
        </authorList>
    </citation>
    <scope>GENOME REANNOTATION</scope>
    <source>
        <strain>cv. Columbia</strain>
    </source>
</reference>